<keyword id="KW-0002">3D-structure</keyword>
<keyword id="KW-0997">Cell inner membrane</keyword>
<keyword id="KW-1003">Cell membrane</keyword>
<keyword id="KW-0274">FAD</keyword>
<keyword id="KW-0285">Flavoprotein</keyword>
<keyword id="KW-0472">Membrane</keyword>
<keyword id="KW-0520">NAD</keyword>
<keyword id="KW-0560">Oxidoreductase</keyword>
<keyword id="KW-1185">Reference proteome</keyword>
<keyword id="KW-0812">Transmembrane</keyword>
<keyword id="KW-1133">Transmembrane helix</keyword>
<reference key="1">
    <citation type="journal article" date="1998" name="Nature">
        <title>Deciphering the biology of Mycobacterium tuberculosis from the complete genome sequence.</title>
        <authorList>
            <person name="Cole S.T."/>
            <person name="Brosch R."/>
            <person name="Parkhill J."/>
            <person name="Garnier T."/>
            <person name="Churcher C.M."/>
            <person name="Harris D.E."/>
            <person name="Gordon S.V."/>
            <person name="Eiglmeier K."/>
            <person name="Gas S."/>
            <person name="Barry C.E. III"/>
            <person name="Tekaia F."/>
            <person name="Badcock K."/>
            <person name="Basham D."/>
            <person name="Brown D."/>
            <person name="Chillingworth T."/>
            <person name="Connor R."/>
            <person name="Davies R.M."/>
            <person name="Devlin K."/>
            <person name="Feltwell T."/>
            <person name="Gentles S."/>
            <person name="Hamlin N."/>
            <person name="Holroyd S."/>
            <person name="Hornsby T."/>
            <person name="Jagels K."/>
            <person name="Krogh A."/>
            <person name="McLean J."/>
            <person name="Moule S."/>
            <person name="Murphy L.D."/>
            <person name="Oliver S."/>
            <person name="Osborne J."/>
            <person name="Quail M.A."/>
            <person name="Rajandream M.A."/>
            <person name="Rogers J."/>
            <person name="Rutter S."/>
            <person name="Seeger K."/>
            <person name="Skelton S."/>
            <person name="Squares S."/>
            <person name="Squares R."/>
            <person name="Sulston J.E."/>
            <person name="Taylor K."/>
            <person name="Whitehead S."/>
            <person name="Barrell B.G."/>
        </authorList>
    </citation>
    <scope>NUCLEOTIDE SEQUENCE [LARGE SCALE GENOMIC DNA]</scope>
    <source>
        <strain>ATCC 25618 / H37Rv</strain>
    </source>
</reference>
<reference key="2">
    <citation type="journal article" date="2005" name="Proc. Natl. Acad. Sci. U.S.A.">
        <title>Inhibitors of type II NADH:menaquinone oxidoreductase represent a class of antitubercular drugs.</title>
        <authorList>
            <person name="Weinstein E.A."/>
            <person name="Yano T."/>
            <person name="Li L.S."/>
            <person name="Avarbock D."/>
            <person name="Avarbock A."/>
            <person name="Helm D."/>
            <person name="McColm A.A."/>
            <person name="Duncan K."/>
            <person name="Lonsdale J.T."/>
            <person name="Rubin H."/>
        </authorList>
    </citation>
    <scope>FUNCTION</scope>
    <scope>CATALYTIC ACTIVITY</scope>
    <scope>ACTIVITY REGULATION</scope>
    <scope>SUBCELLULAR LOCATION</scope>
    <source>
        <strain>H37Rv</strain>
    </source>
</reference>
<reference key="3">
    <citation type="journal article" date="2011" name="Mol. Cell. Proteomics">
        <title>Proteogenomic analysis of Mycobacterium tuberculosis by high resolution mass spectrometry.</title>
        <authorList>
            <person name="Kelkar D.S."/>
            <person name="Kumar D."/>
            <person name="Kumar P."/>
            <person name="Balakrishnan L."/>
            <person name="Muthusamy B."/>
            <person name="Yadav A.K."/>
            <person name="Shrivastava P."/>
            <person name="Marimuthu A."/>
            <person name="Anand S."/>
            <person name="Sundaram H."/>
            <person name="Kingsbury R."/>
            <person name="Harsha H.C."/>
            <person name="Nair B."/>
            <person name="Prasad T.S."/>
            <person name="Chauhan D.S."/>
            <person name="Katoch K."/>
            <person name="Katoch V.M."/>
            <person name="Kumar P."/>
            <person name="Chaerkady R."/>
            <person name="Ramachandran S."/>
            <person name="Dash D."/>
            <person name="Pandey A."/>
        </authorList>
    </citation>
    <scope>IDENTIFICATION BY MASS SPECTROMETRY [LARGE SCALE ANALYSIS]</scope>
    <source>
        <strain>ATCC 25618 / H37Rv</strain>
    </source>
</reference>
<reference key="4">
    <citation type="journal article" date="2014" name="Gene">
        <title>Roles of the two type II NADH dehydrogenases in the survival of Mycobacterium tuberculosis in vitro.</title>
        <authorList>
            <person name="Awasthy D."/>
            <person name="Ambady A."/>
            <person name="Narayana A."/>
            <person name="Morayya S."/>
            <person name="Sharma U."/>
        </authorList>
    </citation>
    <scope>DISRUPTION PHENOTYPE</scope>
    <source>
        <strain>ATCC 27294 / TMC 102 / H37Rv</strain>
    </source>
</reference>
<reference key="5">
    <citation type="journal article" date="2018" name="Proc. Natl. Acad. Sci. U.S.A.">
        <title>Plasticity of Mycobacterium tuberculosis NADH dehydrogenases and their role in virulence.</title>
        <authorList>
            <person name="Vilcheze C."/>
            <person name="Weinrick B."/>
            <person name="Leung L.W."/>
            <person name="Jacobs W.R. Jr."/>
        </authorList>
    </citation>
    <scope>FUNCTION</scope>
    <scope>DISRUPTION PHENOTYPE</scope>
</reference>
<reference key="6">
    <citation type="journal article" date="2018" name="ACS Infect. Dis.">
        <title>2-Mercapto-Quinazolinones as Inhibitors of Type II NADH Dehydrogenase and Mycobacterium tuberculosis: Structure-Activity Relationships, Mechanism of Action and Absorption, Distribution, Metabolism, and Excretion Characterization.</title>
        <authorList>
            <person name="Murugesan D."/>
            <person name="Ray P.C."/>
            <person name="Bayliss T."/>
            <person name="Prosser G.A."/>
            <person name="Harrison J.R."/>
            <person name="Green K."/>
            <person name="Soares de Melo C."/>
            <person name="Feng T.S."/>
            <person name="Street L.J."/>
            <person name="Chibale K."/>
            <person name="Warner D.F."/>
            <person name="Mizrahi V."/>
            <person name="Epemolu O."/>
            <person name="Scullion P."/>
            <person name="Ellis L."/>
            <person name="Riley J."/>
            <person name="Shishikura Y."/>
            <person name="Ferguson L."/>
            <person name="Osuna-Cabello M."/>
            <person name="Read K.D."/>
            <person name="Green S.R."/>
            <person name="Lamprecht D.A."/>
            <person name="Finin P.M."/>
            <person name="Steyn A.J.C."/>
            <person name="Ioerger T.R."/>
            <person name="Sacchettini J."/>
            <person name="Rhee K.Y."/>
            <person name="Arora K."/>
            <person name="Barry C.E. III"/>
            <person name="Wyatt P.G."/>
            <person name="Boshoff H.I.M."/>
        </authorList>
    </citation>
    <scope>FUNCTION</scope>
    <scope>CATALYTIC ACTIVITY</scope>
    <scope>ACTIVITY REGULATION</scope>
    <source>
        <strain>ATCC 27294 / TMC 102 / H37Rv</strain>
    </source>
</reference>
<protein>
    <recommendedName>
        <fullName evidence="9">Type II NADH:quinone oxidoreductase Ndh</fullName>
        <ecNumber evidence="3 6">1.6.5.9</ecNumber>
    </recommendedName>
    <alternativeName>
        <fullName evidence="8">Type II NADH dehydrogenase Ndh</fullName>
    </alternativeName>
</protein>
<sequence length="463" mass="49619">MSPQQEPTAQPPRRHRVVIIGSGFGGLNAAKKLKRADVDIKLIARTTHHLFQPLLYQVATGIISEGEIAPPTRVVLRKQRNVQVLLGNVTHIDLAGQCVVSELLGHTYQTPYDSLIVAAGAGQSYFGNDHFAEFAPGMKSIDDALELRGRILSAFEQAERSSDPERRAKLLTFTVVGAGPTGVEMAGQIAELAEHTLKGAFRHIDSTKARVILLDAAPAVLPPMGAKLGQRAAARLQKLGVEIQLGAMVTDVDRNGITVKDSDGTVRRIESACKVWSAGVSASRLGRDLAEQSRVELDRAGRVQVLPDLSIPGYPNVFVVGDMAAVEGVPGVAQGAIQGAKYVASTIKAELAGANPAEREPFQYFDKGSMATVSRFSAVAKIGPVEFSGFIAWLIWLVLHLAYLIGFKTKITTLLSWTVTFLSTRRGQLTITDQQAFARTRLEQLAELAAEAQGSAASAKVAS</sequence>
<evidence type="ECO:0000250" key="1">
    <source>
        <dbReference type="UniProtKB" id="Q2FZV7"/>
    </source>
</evidence>
<evidence type="ECO:0000255" key="2"/>
<evidence type="ECO:0000269" key="3">
    <source>
    </source>
</evidence>
<evidence type="ECO:0000269" key="4">
    <source>
    </source>
</evidence>
<evidence type="ECO:0000269" key="5">
    <source>
    </source>
</evidence>
<evidence type="ECO:0000269" key="6">
    <source>
    </source>
</evidence>
<evidence type="ECO:0000303" key="7">
    <source>
    </source>
</evidence>
<evidence type="ECO:0000303" key="8">
    <source>
    </source>
</evidence>
<evidence type="ECO:0000305" key="9"/>
<evidence type="ECO:0000312" key="10">
    <source>
        <dbReference type="EMBL" id="CCP44620.1"/>
    </source>
</evidence>
<name>NDH_MYCTU</name>
<comment type="function">
    <text evidence="3 5 6">Alternative, nonproton pumping NADH:quinone oxidoreductase that delivers electrons to the respiratory chain by oxidation of NADH and reduction of quinones (PubMed:15767566, PubMed:29382761, PubMed:29522317). Ndh is probably the main NADH dehydrogenase of M.tuberculosis (PubMed:29382761).</text>
</comment>
<comment type="catalytic activity">
    <reaction evidence="3 6">
        <text>a quinone + NADH + H(+) = a quinol + NAD(+)</text>
        <dbReference type="Rhea" id="RHEA:46160"/>
        <dbReference type="ChEBI" id="CHEBI:15378"/>
        <dbReference type="ChEBI" id="CHEBI:24646"/>
        <dbReference type="ChEBI" id="CHEBI:57540"/>
        <dbReference type="ChEBI" id="CHEBI:57945"/>
        <dbReference type="ChEBI" id="CHEBI:132124"/>
        <dbReference type="EC" id="1.6.5.9"/>
    </reaction>
</comment>
<comment type="catalytic activity">
    <reaction evidence="3">
        <text>a menaquinone + NADH + H(+) = a menaquinol + NAD(+)</text>
        <dbReference type="Rhea" id="RHEA:29235"/>
        <dbReference type="Rhea" id="RHEA-COMP:9537"/>
        <dbReference type="Rhea" id="RHEA-COMP:9539"/>
        <dbReference type="ChEBI" id="CHEBI:15378"/>
        <dbReference type="ChEBI" id="CHEBI:16374"/>
        <dbReference type="ChEBI" id="CHEBI:18151"/>
        <dbReference type="ChEBI" id="CHEBI:57540"/>
        <dbReference type="ChEBI" id="CHEBI:57945"/>
    </reaction>
</comment>
<comment type="catalytic activity">
    <reaction evidence="6">
        <text>a ubiquinone + NADH + H(+) = a ubiquinol + NAD(+)</text>
        <dbReference type="Rhea" id="RHEA:23152"/>
        <dbReference type="Rhea" id="RHEA-COMP:9565"/>
        <dbReference type="Rhea" id="RHEA-COMP:9566"/>
        <dbReference type="ChEBI" id="CHEBI:15378"/>
        <dbReference type="ChEBI" id="CHEBI:16389"/>
        <dbReference type="ChEBI" id="CHEBI:17976"/>
        <dbReference type="ChEBI" id="CHEBI:57540"/>
        <dbReference type="ChEBI" id="CHEBI:57945"/>
    </reaction>
</comment>
<comment type="cofactor">
    <cofactor evidence="1">
        <name>FAD</name>
        <dbReference type="ChEBI" id="CHEBI:57692"/>
    </cofactor>
    <text evidence="1">Binds 1 FAD per subunit.</text>
</comment>
<comment type="activity regulation">
    <text evidence="3 6">Inhibited by phenothiazine analogs (PubMed:15767566). Inhibited by 2-mercapto-quinazolinones (PubMed:29522317). Not inhibited by classic inhibitors of type I NADH dehydrogenase, such as rotenone, piericidin A and pyridaben (PubMed:15767566).</text>
</comment>
<comment type="subcellular location">
    <subcellularLocation>
        <location evidence="3">Cell inner membrane</location>
        <topology evidence="2">Single-pass membrane protein</topology>
    </subcellularLocation>
</comment>
<comment type="disruption phenotype">
    <text evidence="4 5">Deletion mutant is attenuated for growth and virulence in mice (PubMed:29382761). Deletion of the gene alters the NADH/NAD(+) ratio, suggesting that this enzyme has an important function in maintaining the redox status of the cell (PubMed:29382761). Mutant shows growth defects in vitro and is more susceptible to oxidative stress reagents, but not to potential NADH dehydrogenase inhibitors (PubMed:29382761). Was considered as an essential gene in vitro, but later studies show that ndh is not essential individually (PubMed:25128581, PubMed:29382761). The ndh-ndhA double knockout could not be obtained, suggesting that at least one type II NADH dehydrogenase is required for M.tuberculosis growth (PubMed:29382761).</text>
</comment>
<comment type="similarity">
    <text evidence="9">Belongs to the NADH dehydrogenase family.</text>
</comment>
<gene>
    <name evidence="7" type="primary">ndh</name>
    <name evidence="10" type="ordered locus">Rv1854c</name>
</gene>
<feature type="chain" id="PRO_0000452727" description="Type II NADH:quinone oxidoreductase Ndh">
    <location>
        <begin position="1"/>
        <end position="463"/>
    </location>
</feature>
<feature type="transmembrane region" description="Helical" evidence="2">
    <location>
        <begin position="387"/>
        <end position="407"/>
    </location>
</feature>
<feature type="active site" evidence="1">
    <location>
        <position position="184"/>
    </location>
</feature>
<feature type="binding site" evidence="1">
    <location>
        <begin position="21"/>
        <end position="25"/>
    </location>
    <ligand>
        <name>FAD</name>
        <dbReference type="ChEBI" id="CHEBI:57692"/>
    </ligand>
</feature>
<feature type="binding site" evidence="1">
    <location>
        <position position="89"/>
    </location>
    <ligand>
        <name>FAD</name>
        <dbReference type="ChEBI" id="CHEBI:57692"/>
    </ligand>
</feature>
<feature type="binding site" evidence="1">
    <location>
        <position position="322"/>
    </location>
    <ligand>
        <name>FAD</name>
        <dbReference type="ChEBI" id="CHEBI:57692"/>
    </ligand>
</feature>
<feature type="binding site" evidence="1">
    <location>
        <begin position="333"/>
        <end position="334"/>
    </location>
    <ligand>
        <name>FAD</name>
        <dbReference type="ChEBI" id="CHEBI:57692"/>
    </ligand>
</feature>
<organism>
    <name type="scientific">Mycobacterium tuberculosis (strain ATCC 25618 / H37Rv)</name>
    <dbReference type="NCBI Taxonomy" id="83332"/>
    <lineage>
        <taxon>Bacteria</taxon>
        <taxon>Bacillati</taxon>
        <taxon>Actinomycetota</taxon>
        <taxon>Actinomycetes</taxon>
        <taxon>Mycobacteriales</taxon>
        <taxon>Mycobacteriaceae</taxon>
        <taxon>Mycobacterium</taxon>
        <taxon>Mycobacterium tuberculosis complex</taxon>
    </lineage>
</organism>
<accession>P95160</accession>
<accession>F2GI96</accession>
<accession>I6XZ55</accession>
<accession>Q7D7W7</accession>
<dbReference type="EC" id="1.6.5.9" evidence="3 6"/>
<dbReference type="EMBL" id="AL123456">
    <property type="protein sequence ID" value="CCP44620.1"/>
    <property type="molecule type" value="Genomic_DNA"/>
</dbReference>
<dbReference type="RefSeq" id="NP_216370.1">
    <property type="nucleotide sequence ID" value="NC_000962.3"/>
</dbReference>
<dbReference type="RefSeq" id="WP_003409317.1">
    <property type="nucleotide sequence ID" value="NZ_NVQJ01000013.1"/>
</dbReference>
<dbReference type="PDB" id="9MQY">
    <property type="method" value="EM"/>
    <property type="resolution" value="3.00 A"/>
    <property type="chains" value="A/B=4-459"/>
</dbReference>
<dbReference type="PDB" id="9MQZ">
    <property type="method" value="EM"/>
    <property type="resolution" value="3.00 A"/>
    <property type="chains" value="A/B=4-459"/>
</dbReference>
<dbReference type="PDBsum" id="9MQY"/>
<dbReference type="PDBsum" id="9MQZ"/>
<dbReference type="SMR" id="P95160"/>
<dbReference type="FunCoup" id="P95160">
    <property type="interactions" value="153"/>
</dbReference>
<dbReference type="STRING" id="83332.Rv1854c"/>
<dbReference type="BindingDB" id="P95160"/>
<dbReference type="ChEMBL" id="CHEMBL5169228"/>
<dbReference type="PaxDb" id="83332-Rv1854c"/>
<dbReference type="DNASU" id="885746"/>
<dbReference type="GeneID" id="885746"/>
<dbReference type="KEGG" id="mtu:Rv1854c"/>
<dbReference type="KEGG" id="mtv:RVBD_1854c"/>
<dbReference type="PATRIC" id="fig|83332.111.peg.2060"/>
<dbReference type="TubercuList" id="Rv1854c"/>
<dbReference type="eggNOG" id="COG1252">
    <property type="taxonomic scope" value="Bacteria"/>
</dbReference>
<dbReference type="InParanoid" id="P95160"/>
<dbReference type="OrthoDB" id="9781621at2"/>
<dbReference type="PhylomeDB" id="P95160"/>
<dbReference type="Proteomes" id="UP000001584">
    <property type="component" value="Chromosome"/>
</dbReference>
<dbReference type="GO" id="GO:0005886">
    <property type="term" value="C:plasma membrane"/>
    <property type="evidence" value="ECO:0007005"/>
    <property type="project" value="MTBBASE"/>
</dbReference>
<dbReference type="GO" id="GO:0003955">
    <property type="term" value="F:NAD(P)H dehydrogenase (quinone) activity"/>
    <property type="evidence" value="ECO:0000314"/>
    <property type="project" value="MTBBASE"/>
</dbReference>
<dbReference type="GO" id="GO:0050136">
    <property type="term" value="F:NADH:ubiquinone reductase (non-electrogenic) activity"/>
    <property type="evidence" value="ECO:0007669"/>
    <property type="project" value="UniProtKB-EC"/>
</dbReference>
<dbReference type="GO" id="GO:0019646">
    <property type="term" value="P:aerobic electron transport chain"/>
    <property type="evidence" value="ECO:0000314"/>
    <property type="project" value="MTBBASE"/>
</dbReference>
<dbReference type="FunFam" id="3.50.50.100:FF:000011">
    <property type="entry name" value="Membrane NADH dehydrogenase"/>
    <property type="match status" value="1"/>
</dbReference>
<dbReference type="Gene3D" id="3.50.50.100">
    <property type="match status" value="1"/>
</dbReference>
<dbReference type="InterPro" id="IPR036188">
    <property type="entry name" value="FAD/NAD-bd_sf"/>
</dbReference>
<dbReference type="InterPro" id="IPR023753">
    <property type="entry name" value="FAD/NAD-binding_dom"/>
</dbReference>
<dbReference type="InterPro" id="IPR045024">
    <property type="entry name" value="NDH-2"/>
</dbReference>
<dbReference type="PANTHER" id="PTHR43706:SF47">
    <property type="entry name" value="EXTERNAL NADH-UBIQUINONE OXIDOREDUCTASE 1, MITOCHONDRIAL-RELATED"/>
    <property type="match status" value="1"/>
</dbReference>
<dbReference type="PANTHER" id="PTHR43706">
    <property type="entry name" value="NADH DEHYDROGENASE"/>
    <property type="match status" value="1"/>
</dbReference>
<dbReference type="Pfam" id="PF07992">
    <property type="entry name" value="Pyr_redox_2"/>
    <property type="match status" value="1"/>
</dbReference>
<dbReference type="PRINTS" id="PR00368">
    <property type="entry name" value="FADPNR"/>
</dbReference>
<dbReference type="PRINTS" id="PR00411">
    <property type="entry name" value="PNDRDTASEI"/>
</dbReference>
<dbReference type="SUPFAM" id="SSF51905">
    <property type="entry name" value="FAD/NAD(P)-binding domain"/>
    <property type="match status" value="1"/>
</dbReference>
<proteinExistence type="evidence at protein level"/>